<gene>
    <name evidence="1" type="primary">luxS</name>
    <name type="ordered locus">Lm4b_01298</name>
</gene>
<protein>
    <recommendedName>
        <fullName evidence="1">S-ribosylhomocysteine lyase</fullName>
        <ecNumber evidence="1">4.4.1.21</ecNumber>
    </recommendedName>
    <alternativeName>
        <fullName evidence="1">AI-2 synthesis protein</fullName>
    </alternativeName>
    <alternativeName>
        <fullName evidence="1">Autoinducer-2 production protein LuxS</fullName>
    </alternativeName>
</protein>
<dbReference type="EC" id="4.4.1.21" evidence="1"/>
<dbReference type="EMBL" id="FM242711">
    <property type="protein sequence ID" value="CAS05062.1"/>
    <property type="molecule type" value="Genomic_DNA"/>
</dbReference>
<dbReference type="RefSeq" id="WP_003726814.1">
    <property type="nucleotide sequence ID" value="NC_012488.1"/>
</dbReference>
<dbReference type="SMR" id="C1L2J6"/>
<dbReference type="KEGG" id="lmc:Lm4b_01298"/>
<dbReference type="HOGENOM" id="CLU_107531_2_0_9"/>
<dbReference type="GO" id="GO:0005506">
    <property type="term" value="F:iron ion binding"/>
    <property type="evidence" value="ECO:0007669"/>
    <property type="project" value="InterPro"/>
</dbReference>
<dbReference type="GO" id="GO:0043768">
    <property type="term" value="F:S-ribosylhomocysteine lyase activity"/>
    <property type="evidence" value="ECO:0007669"/>
    <property type="project" value="UniProtKB-UniRule"/>
</dbReference>
<dbReference type="GO" id="GO:0009372">
    <property type="term" value="P:quorum sensing"/>
    <property type="evidence" value="ECO:0007669"/>
    <property type="project" value="UniProtKB-UniRule"/>
</dbReference>
<dbReference type="FunFam" id="3.30.1360.80:FF:000002">
    <property type="entry name" value="S-ribosylhomocysteine lyase"/>
    <property type="match status" value="1"/>
</dbReference>
<dbReference type="Gene3D" id="3.30.1360.80">
    <property type="entry name" value="S-ribosylhomocysteinase (LuxS)"/>
    <property type="match status" value="1"/>
</dbReference>
<dbReference type="HAMAP" id="MF_00091">
    <property type="entry name" value="LuxS"/>
    <property type="match status" value="1"/>
</dbReference>
<dbReference type="InterPro" id="IPR037005">
    <property type="entry name" value="LuxS_sf"/>
</dbReference>
<dbReference type="InterPro" id="IPR011249">
    <property type="entry name" value="Metalloenz_LuxS/M16"/>
</dbReference>
<dbReference type="InterPro" id="IPR003815">
    <property type="entry name" value="S-ribosylhomocysteinase"/>
</dbReference>
<dbReference type="NCBIfam" id="NF002604">
    <property type="entry name" value="PRK02260.1-4"/>
    <property type="match status" value="1"/>
</dbReference>
<dbReference type="PANTHER" id="PTHR35799">
    <property type="entry name" value="S-RIBOSYLHOMOCYSTEINE LYASE"/>
    <property type="match status" value="1"/>
</dbReference>
<dbReference type="PANTHER" id="PTHR35799:SF1">
    <property type="entry name" value="S-RIBOSYLHOMOCYSTEINE LYASE"/>
    <property type="match status" value="1"/>
</dbReference>
<dbReference type="Pfam" id="PF02664">
    <property type="entry name" value="LuxS"/>
    <property type="match status" value="1"/>
</dbReference>
<dbReference type="PIRSF" id="PIRSF006160">
    <property type="entry name" value="AI2"/>
    <property type="match status" value="1"/>
</dbReference>
<dbReference type="PRINTS" id="PR01487">
    <property type="entry name" value="LUXSPROTEIN"/>
</dbReference>
<dbReference type="SUPFAM" id="SSF63411">
    <property type="entry name" value="LuxS/MPP-like metallohydrolase"/>
    <property type="match status" value="1"/>
</dbReference>
<comment type="function">
    <text evidence="1">Involved in the synthesis of autoinducer 2 (AI-2) which is secreted by bacteria and is used to communicate both the cell density and the metabolic potential of the environment. The regulation of gene expression in response to changes in cell density is called quorum sensing. Catalyzes the transformation of S-ribosylhomocysteine (RHC) to homocysteine (HC) and 4,5-dihydroxy-2,3-pentadione (DPD).</text>
</comment>
<comment type="catalytic activity">
    <reaction evidence="1">
        <text>S-(5-deoxy-D-ribos-5-yl)-L-homocysteine = (S)-4,5-dihydroxypentane-2,3-dione + L-homocysteine</text>
        <dbReference type="Rhea" id="RHEA:17753"/>
        <dbReference type="ChEBI" id="CHEBI:29484"/>
        <dbReference type="ChEBI" id="CHEBI:58195"/>
        <dbReference type="ChEBI" id="CHEBI:58199"/>
        <dbReference type="EC" id="4.4.1.21"/>
    </reaction>
</comment>
<comment type="cofactor">
    <cofactor evidence="1">
        <name>Fe cation</name>
        <dbReference type="ChEBI" id="CHEBI:24875"/>
    </cofactor>
    <text evidence="1">Binds 1 Fe cation per subunit.</text>
</comment>
<comment type="subunit">
    <text evidence="1">Homodimer.</text>
</comment>
<comment type="similarity">
    <text evidence="1">Belongs to the LuxS family.</text>
</comment>
<sequence>MAEKMNVESFNLDHTKVKAPFVRLAGTKVGVHGDEIYKYDVRFKQPNKEHMEMPALHSLEHLMAELARNHTDKLVDISPMGCQTGFYVSFINHSDYDDALEIIATTLTDVLAATEVPACNEVQCGWAASHSLEGAKALAAEFLDKRDEWKNVFGE</sequence>
<accession>C1L2J6</accession>
<evidence type="ECO:0000255" key="1">
    <source>
        <dbReference type="HAMAP-Rule" id="MF_00091"/>
    </source>
</evidence>
<organism>
    <name type="scientific">Listeria monocytogenes serotype 4b (strain CLIP80459)</name>
    <dbReference type="NCBI Taxonomy" id="568819"/>
    <lineage>
        <taxon>Bacteria</taxon>
        <taxon>Bacillati</taxon>
        <taxon>Bacillota</taxon>
        <taxon>Bacilli</taxon>
        <taxon>Bacillales</taxon>
        <taxon>Listeriaceae</taxon>
        <taxon>Listeria</taxon>
    </lineage>
</organism>
<feature type="chain" id="PRO_1000202672" description="S-ribosylhomocysteine lyase">
    <location>
        <begin position="1"/>
        <end position="155"/>
    </location>
</feature>
<feature type="binding site" evidence="1">
    <location>
        <position position="57"/>
    </location>
    <ligand>
        <name>Fe cation</name>
        <dbReference type="ChEBI" id="CHEBI:24875"/>
    </ligand>
</feature>
<feature type="binding site" evidence="1">
    <location>
        <position position="61"/>
    </location>
    <ligand>
        <name>Fe cation</name>
        <dbReference type="ChEBI" id="CHEBI:24875"/>
    </ligand>
</feature>
<feature type="binding site" evidence="1">
    <location>
        <position position="124"/>
    </location>
    <ligand>
        <name>Fe cation</name>
        <dbReference type="ChEBI" id="CHEBI:24875"/>
    </ligand>
</feature>
<keyword id="KW-0071">Autoinducer synthesis</keyword>
<keyword id="KW-0408">Iron</keyword>
<keyword id="KW-0456">Lyase</keyword>
<keyword id="KW-0479">Metal-binding</keyword>
<keyword id="KW-0673">Quorum sensing</keyword>
<name>LUXS_LISMC</name>
<proteinExistence type="inferred from homology"/>
<reference key="1">
    <citation type="journal article" date="2012" name="BMC Genomics">
        <title>Comparative genomics and transcriptomics of lineages I, II, and III strains of Listeria monocytogenes.</title>
        <authorList>
            <person name="Hain T."/>
            <person name="Ghai R."/>
            <person name="Billion A."/>
            <person name="Kuenne C.T."/>
            <person name="Steinweg C."/>
            <person name="Izar B."/>
            <person name="Mohamed W."/>
            <person name="Mraheil M."/>
            <person name="Domann E."/>
            <person name="Schaffrath S."/>
            <person name="Karst U."/>
            <person name="Goesmann A."/>
            <person name="Oehm S."/>
            <person name="Puhler A."/>
            <person name="Merkl R."/>
            <person name="Vorwerk S."/>
            <person name="Glaser P."/>
            <person name="Garrido P."/>
            <person name="Rusniok C."/>
            <person name="Buchrieser C."/>
            <person name="Goebel W."/>
            <person name="Chakraborty T."/>
        </authorList>
    </citation>
    <scope>NUCLEOTIDE SEQUENCE [LARGE SCALE GENOMIC DNA]</scope>
    <source>
        <strain>CLIP80459</strain>
    </source>
</reference>